<accession>A4VTZ7</accession>
<feature type="chain" id="PRO_1000056868" description="Nucleotide-binding protein SSU05_0620">
    <location>
        <begin position="1"/>
        <end position="295"/>
    </location>
</feature>
<feature type="binding site" evidence="1">
    <location>
        <begin position="12"/>
        <end position="19"/>
    </location>
    <ligand>
        <name>ATP</name>
        <dbReference type="ChEBI" id="CHEBI:30616"/>
    </ligand>
</feature>
<feature type="binding site" evidence="1">
    <location>
        <begin position="62"/>
        <end position="65"/>
    </location>
    <ligand>
        <name>GTP</name>
        <dbReference type="ChEBI" id="CHEBI:37565"/>
    </ligand>
</feature>
<reference key="1">
    <citation type="journal article" date="2007" name="PLoS ONE">
        <title>A glimpse of streptococcal toxic shock syndrome from comparative genomics of S. suis 2 Chinese isolates.</title>
        <authorList>
            <person name="Chen C."/>
            <person name="Tang J."/>
            <person name="Dong W."/>
            <person name="Wang C."/>
            <person name="Feng Y."/>
            <person name="Wang J."/>
            <person name="Zheng F."/>
            <person name="Pan X."/>
            <person name="Liu D."/>
            <person name="Li M."/>
            <person name="Song Y."/>
            <person name="Zhu X."/>
            <person name="Sun H."/>
            <person name="Feng T."/>
            <person name="Guo Z."/>
            <person name="Ju A."/>
            <person name="Ge J."/>
            <person name="Dong Y."/>
            <person name="Sun W."/>
            <person name="Jiang Y."/>
            <person name="Wang J."/>
            <person name="Yan J."/>
            <person name="Yang H."/>
            <person name="Wang X."/>
            <person name="Gao G.F."/>
            <person name="Yang R."/>
            <person name="Wang J."/>
            <person name="Yu J."/>
        </authorList>
    </citation>
    <scope>NUCLEOTIDE SEQUENCE [LARGE SCALE GENOMIC DNA]</scope>
    <source>
        <strain>05ZYH33</strain>
    </source>
</reference>
<sequence length="295" mass="33666">MSDKLHLVIVTGMSGAGKTVAIQSFEDLGYFTIDNMPPTLLPKFLELIRHSQDNNKIALVVDMRSRSFFSEIREVLDEIEGAEDLDFKVLFLDATDSELVARYKETRRSHPLAADGRVLDGIQLERELLAPLKNMSQNVIDTTELTPRNLRKVISEQFASQDNQPSFRIEVMSFGFKYGLPLDADLVFDVRFLPNPYYKLELRNLTGLDAPVFDYVMEHQESEEFYSHLLGLIEPILPGYQKEGKSVLTIAVGCTGGQHRSVAFAKRLADDLEKNWNVNRSHRDKDRRKETVNRS</sequence>
<comment type="function">
    <text evidence="1">Displays ATPase and GTPase activities.</text>
</comment>
<comment type="similarity">
    <text evidence="1">Belongs to the RapZ-like family.</text>
</comment>
<name>Y620_STRSY</name>
<organism>
    <name type="scientific">Streptococcus suis (strain 05ZYH33)</name>
    <dbReference type="NCBI Taxonomy" id="391295"/>
    <lineage>
        <taxon>Bacteria</taxon>
        <taxon>Bacillati</taxon>
        <taxon>Bacillota</taxon>
        <taxon>Bacilli</taxon>
        <taxon>Lactobacillales</taxon>
        <taxon>Streptococcaceae</taxon>
        <taxon>Streptococcus</taxon>
    </lineage>
</organism>
<dbReference type="EMBL" id="CP000407">
    <property type="protein sequence ID" value="ABP89586.1"/>
    <property type="molecule type" value="Genomic_DNA"/>
</dbReference>
<dbReference type="SMR" id="A4VTZ7"/>
<dbReference type="STRING" id="391295.SSU05_0620"/>
<dbReference type="KEGG" id="ssu:SSU05_0620"/>
<dbReference type="eggNOG" id="COG1660">
    <property type="taxonomic scope" value="Bacteria"/>
</dbReference>
<dbReference type="HOGENOM" id="CLU_059558_0_0_9"/>
<dbReference type="BioCyc" id="SSUI391295:GHI8-668-MONOMER"/>
<dbReference type="GO" id="GO:0005524">
    <property type="term" value="F:ATP binding"/>
    <property type="evidence" value="ECO:0007669"/>
    <property type="project" value="UniProtKB-UniRule"/>
</dbReference>
<dbReference type="GO" id="GO:0005525">
    <property type="term" value="F:GTP binding"/>
    <property type="evidence" value="ECO:0007669"/>
    <property type="project" value="UniProtKB-UniRule"/>
</dbReference>
<dbReference type="Gene3D" id="3.40.50.300">
    <property type="entry name" value="P-loop containing nucleotide triphosphate hydrolases"/>
    <property type="match status" value="1"/>
</dbReference>
<dbReference type="HAMAP" id="MF_00636">
    <property type="entry name" value="RapZ_like"/>
    <property type="match status" value="1"/>
</dbReference>
<dbReference type="InterPro" id="IPR027417">
    <property type="entry name" value="P-loop_NTPase"/>
</dbReference>
<dbReference type="InterPro" id="IPR005337">
    <property type="entry name" value="RapZ-like"/>
</dbReference>
<dbReference type="InterPro" id="IPR053930">
    <property type="entry name" value="RapZ-like_N"/>
</dbReference>
<dbReference type="InterPro" id="IPR053931">
    <property type="entry name" value="RapZ_C"/>
</dbReference>
<dbReference type="NCBIfam" id="NF003828">
    <property type="entry name" value="PRK05416.1"/>
    <property type="match status" value="1"/>
</dbReference>
<dbReference type="PANTHER" id="PTHR30448">
    <property type="entry name" value="RNASE ADAPTER PROTEIN RAPZ"/>
    <property type="match status" value="1"/>
</dbReference>
<dbReference type="PANTHER" id="PTHR30448:SF0">
    <property type="entry name" value="RNASE ADAPTER PROTEIN RAPZ"/>
    <property type="match status" value="1"/>
</dbReference>
<dbReference type="Pfam" id="PF22740">
    <property type="entry name" value="PapZ_C"/>
    <property type="match status" value="1"/>
</dbReference>
<dbReference type="Pfam" id="PF03668">
    <property type="entry name" value="RapZ-like_N"/>
    <property type="match status" value="1"/>
</dbReference>
<dbReference type="PIRSF" id="PIRSF005052">
    <property type="entry name" value="P-loopkin"/>
    <property type="match status" value="1"/>
</dbReference>
<dbReference type="SUPFAM" id="SSF52540">
    <property type="entry name" value="P-loop containing nucleoside triphosphate hydrolases"/>
    <property type="match status" value="1"/>
</dbReference>
<protein>
    <recommendedName>
        <fullName evidence="1">Nucleotide-binding protein SSU05_0620</fullName>
    </recommendedName>
</protein>
<keyword id="KW-0067">ATP-binding</keyword>
<keyword id="KW-0342">GTP-binding</keyword>
<keyword id="KW-0547">Nucleotide-binding</keyword>
<evidence type="ECO:0000255" key="1">
    <source>
        <dbReference type="HAMAP-Rule" id="MF_00636"/>
    </source>
</evidence>
<gene>
    <name type="ordered locus">SSU05_0620</name>
</gene>
<proteinExistence type="inferred from homology"/>